<gene>
    <name type="primary">RALGAPB</name>
    <name type="synonym">KIAA1219</name>
</gene>
<accession>Q86X10</accession>
<accession>A2A2E8</accession>
<accession>A2A2E9</accession>
<accession>Q5TG31</accession>
<accession>Q8N3D1</accession>
<accession>Q8WWC0</accession>
<accession>Q9H3X8</accession>
<accession>Q9UJR1</accession>
<accession>Q9ULK1</accession>
<accession>Q9Y3G9</accession>
<protein>
    <recommendedName>
        <fullName>Ral GTPase-activating protein subunit beta</fullName>
    </recommendedName>
    <alternativeName>
        <fullName>p170</fullName>
    </alternativeName>
</protein>
<dbReference type="EMBL" id="AB033045">
    <property type="protein sequence ID" value="BAA86533.3"/>
    <property type="status" value="ALT_INIT"/>
    <property type="molecule type" value="mRNA"/>
</dbReference>
<dbReference type="EMBL" id="AL834436">
    <property type="protein sequence ID" value="CAD39096.1"/>
    <property type="status" value="ALT_INIT"/>
    <property type="molecule type" value="mRNA"/>
</dbReference>
<dbReference type="EMBL" id="AL132998">
    <property type="protein sequence ID" value="CAB61346.1"/>
    <property type="status" value="ALT_INIT"/>
    <property type="molecule type" value="mRNA"/>
</dbReference>
<dbReference type="EMBL" id="AL035419">
    <property type="status" value="NOT_ANNOTATED_CDS"/>
    <property type="molecule type" value="Genomic_DNA"/>
</dbReference>
<dbReference type="EMBL" id="AL049868">
    <property type="status" value="NOT_ANNOTATED_CDS"/>
    <property type="molecule type" value="Genomic_DNA"/>
</dbReference>
<dbReference type="EMBL" id="BC010916">
    <property type="protein sequence ID" value="AAH10916.2"/>
    <property type="molecule type" value="mRNA"/>
</dbReference>
<dbReference type="EMBL" id="BC018668">
    <property type="protein sequence ID" value="AAH18668.1"/>
    <property type="molecule type" value="mRNA"/>
</dbReference>
<dbReference type="EMBL" id="BC047482">
    <property type="protein sequence ID" value="AAH47482.1"/>
    <property type="molecule type" value="mRNA"/>
</dbReference>
<dbReference type="EMBL" id="AK123576">
    <property type="protein sequence ID" value="BAC85649.1"/>
    <property type="status" value="ALT_INIT"/>
    <property type="molecule type" value="mRNA"/>
</dbReference>
<dbReference type="CCDS" id="CCDS13305.1">
    <molecule id="Q86X10-1"/>
</dbReference>
<dbReference type="CCDS" id="CCDS63272.1">
    <molecule id="Q86X10-3"/>
</dbReference>
<dbReference type="RefSeq" id="NP_001269846.1">
    <molecule id="Q86X10-1"/>
    <property type="nucleotide sequence ID" value="NM_001282917.2"/>
</dbReference>
<dbReference type="RefSeq" id="NP_001269847.1">
    <molecule id="Q86X10-3"/>
    <property type="nucleotide sequence ID" value="NM_001282918.2"/>
</dbReference>
<dbReference type="RefSeq" id="NP_065069.1">
    <molecule id="Q86X10-1"/>
    <property type="nucleotide sequence ID" value="NM_020336.4"/>
</dbReference>
<dbReference type="BioGRID" id="121405">
    <property type="interactions" value="69"/>
</dbReference>
<dbReference type="FunCoup" id="Q86X10">
    <property type="interactions" value="3520"/>
</dbReference>
<dbReference type="IntAct" id="Q86X10">
    <property type="interactions" value="42"/>
</dbReference>
<dbReference type="MINT" id="Q86X10"/>
<dbReference type="STRING" id="9606.ENSP00000262879"/>
<dbReference type="GlyCosmos" id="Q86X10">
    <property type="glycosylation" value="1 site, 1 glycan"/>
</dbReference>
<dbReference type="GlyGen" id="Q86X10">
    <property type="glycosylation" value="6 sites, 2 N-linked glycans (2 sites), 1 O-linked glycan (2 sites)"/>
</dbReference>
<dbReference type="iPTMnet" id="Q86X10"/>
<dbReference type="PhosphoSitePlus" id="Q86X10"/>
<dbReference type="SwissPalm" id="Q86X10"/>
<dbReference type="BioMuta" id="RALGAPB"/>
<dbReference type="DMDM" id="45477126"/>
<dbReference type="jPOST" id="Q86X10"/>
<dbReference type="MassIVE" id="Q86X10"/>
<dbReference type="PaxDb" id="9606-ENSP00000262879"/>
<dbReference type="PeptideAtlas" id="Q86X10"/>
<dbReference type="ProteomicsDB" id="195"/>
<dbReference type="ProteomicsDB" id="70218">
    <molecule id="Q86X10-1"/>
</dbReference>
<dbReference type="ProteomicsDB" id="70219">
    <molecule id="Q86X10-2"/>
</dbReference>
<dbReference type="ProteomicsDB" id="70220">
    <molecule id="Q86X10-3"/>
</dbReference>
<dbReference type="ProteomicsDB" id="70221">
    <molecule id="Q86X10-4"/>
</dbReference>
<dbReference type="Pumba" id="Q86X10"/>
<dbReference type="Antibodypedia" id="62413">
    <property type="antibodies" value="24 antibodies from 11 providers"/>
</dbReference>
<dbReference type="DNASU" id="57148"/>
<dbReference type="Ensembl" id="ENST00000262879.11">
    <molecule id="Q86X10-1"/>
    <property type="protein sequence ID" value="ENSP00000262879.6"/>
    <property type="gene ID" value="ENSG00000170471.15"/>
</dbReference>
<dbReference type="Ensembl" id="ENST00000397040.5">
    <molecule id="Q86X10-1"/>
    <property type="protein sequence ID" value="ENSP00000380233.1"/>
    <property type="gene ID" value="ENSG00000170471.15"/>
</dbReference>
<dbReference type="Ensembl" id="ENST00000397042.7">
    <molecule id="Q86X10-3"/>
    <property type="protein sequence ID" value="ENSP00000380235.3"/>
    <property type="gene ID" value="ENSG00000170471.15"/>
</dbReference>
<dbReference type="GeneID" id="57148"/>
<dbReference type="KEGG" id="hsa:57148"/>
<dbReference type="MANE-Select" id="ENST00000262879.11">
    <property type="protein sequence ID" value="ENSP00000262879.6"/>
    <property type="RefSeq nucleotide sequence ID" value="NM_020336.4"/>
    <property type="RefSeq protein sequence ID" value="NP_065069.1"/>
</dbReference>
<dbReference type="UCSC" id="uc002xiw.5">
    <molecule id="Q86X10-1"/>
    <property type="organism name" value="human"/>
</dbReference>
<dbReference type="AGR" id="HGNC:29221"/>
<dbReference type="CTD" id="57148"/>
<dbReference type="DisGeNET" id="57148"/>
<dbReference type="GeneCards" id="RALGAPB"/>
<dbReference type="HGNC" id="HGNC:29221">
    <property type="gene designation" value="RALGAPB"/>
</dbReference>
<dbReference type="HPA" id="ENSG00000170471">
    <property type="expression patterns" value="Low tissue specificity"/>
</dbReference>
<dbReference type="MIM" id="618833">
    <property type="type" value="gene"/>
</dbReference>
<dbReference type="neXtProt" id="NX_Q86X10"/>
<dbReference type="OpenTargets" id="ENSG00000170471"/>
<dbReference type="PharmGKB" id="PA165392608"/>
<dbReference type="VEuPathDB" id="HostDB:ENSG00000170471"/>
<dbReference type="eggNOG" id="KOG3652">
    <property type="taxonomic scope" value="Eukaryota"/>
</dbReference>
<dbReference type="GeneTree" id="ENSGT00700000104550"/>
<dbReference type="HOGENOM" id="CLU_005005_1_0_1"/>
<dbReference type="InParanoid" id="Q86X10"/>
<dbReference type="OMA" id="CWEECCV"/>
<dbReference type="OrthoDB" id="10009983at2759"/>
<dbReference type="PAN-GO" id="Q86X10">
    <property type="GO annotations" value="2 GO annotations based on evolutionary models"/>
</dbReference>
<dbReference type="PhylomeDB" id="Q86X10"/>
<dbReference type="TreeFam" id="TF324460"/>
<dbReference type="PathwayCommons" id="Q86X10"/>
<dbReference type="Reactome" id="R-HSA-1445148">
    <property type="pathway name" value="Translocation of SLC2A4 (GLUT4) to the plasma membrane"/>
</dbReference>
<dbReference type="SignaLink" id="Q86X10"/>
<dbReference type="SIGNOR" id="Q86X10"/>
<dbReference type="BioGRID-ORCS" id="57148">
    <property type="hits" value="65 hits in 1175 CRISPR screens"/>
</dbReference>
<dbReference type="ChiTaRS" id="RALGAPB">
    <property type="organism name" value="human"/>
</dbReference>
<dbReference type="GeneWiki" id="KIAA1219"/>
<dbReference type="GenomeRNAi" id="57148"/>
<dbReference type="Pharos" id="Q86X10">
    <property type="development level" value="Tbio"/>
</dbReference>
<dbReference type="PRO" id="PR:Q86X10"/>
<dbReference type="Proteomes" id="UP000005640">
    <property type="component" value="Chromosome 20"/>
</dbReference>
<dbReference type="RNAct" id="Q86X10">
    <property type="molecule type" value="protein"/>
</dbReference>
<dbReference type="Bgee" id="ENSG00000170471">
    <property type="expression patterns" value="Expressed in buccal mucosa cell and 204 other cell types or tissues"/>
</dbReference>
<dbReference type="ExpressionAtlas" id="Q86X10">
    <property type="expression patterns" value="baseline and differential"/>
</dbReference>
<dbReference type="GO" id="GO:0005096">
    <property type="term" value="F:GTPase activator activity"/>
    <property type="evidence" value="ECO:0000250"/>
    <property type="project" value="UniProtKB"/>
</dbReference>
<dbReference type="GO" id="GO:0046982">
    <property type="term" value="F:protein heterodimerization activity"/>
    <property type="evidence" value="ECO:0000353"/>
    <property type="project" value="UniProtKB"/>
</dbReference>
<dbReference type="GO" id="GO:0090630">
    <property type="term" value="P:activation of GTPase activity"/>
    <property type="evidence" value="ECO:0000250"/>
    <property type="project" value="UniProtKB"/>
</dbReference>
<dbReference type="GO" id="GO:0032484">
    <property type="term" value="P:Ral protein signal transduction"/>
    <property type="evidence" value="ECO:0000318"/>
    <property type="project" value="GO_Central"/>
</dbReference>
<dbReference type="GO" id="GO:0051056">
    <property type="term" value="P:regulation of small GTPase mediated signal transduction"/>
    <property type="evidence" value="ECO:0007669"/>
    <property type="project" value="InterPro"/>
</dbReference>
<dbReference type="FunFam" id="3.40.50.11210:FF:000005">
    <property type="entry name" value="Ral GTPase-activating protein, beta subunit (non-catalytic)"/>
    <property type="match status" value="1"/>
</dbReference>
<dbReference type="Gene3D" id="3.40.50.11210">
    <property type="entry name" value="Rap/Ran-GAP"/>
    <property type="match status" value="1"/>
</dbReference>
<dbReference type="InterPro" id="IPR039930">
    <property type="entry name" value="RALGAPB"/>
</dbReference>
<dbReference type="InterPro" id="IPR035974">
    <property type="entry name" value="Rap/Ran-GAP_sf"/>
</dbReference>
<dbReference type="InterPro" id="IPR000331">
    <property type="entry name" value="Rap/Ran_GAP_dom"/>
</dbReference>
<dbReference type="InterPro" id="IPR046859">
    <property type="entry name" value="RGPA/RALGAPB_N"/>
</dbReference>
<dbReference type="PANTHER" id="PTHR21344">
    <property type="entry name" value="RAL GTPASE-ACTIVATING PROTEIN SUBUNIT BETA"/>
    <property type="match status" value="1"/>
</dbReference>
<dbReference type="PANTHER" id="PTHR21344:SF1">
    <property type="entry name" value="RAL GTPASE-ACTIVATING PROTEIN SUBUNIT BETA"/>
    <property type="match status" value="1"/>
</dbReference>
<dbReference type="Pfam" id="PF20412">
    <property type="entry name" value="RALGAPB_N"/>
    <property type="match status" value="1"/>
</dbReference>
<dbReference type="SUPFAM" id="SSF111347">
    <property type="entry name" value="Rap/Ran-GAP"/>
    <property type="match status" value="1"/>
</dbReference>
<dbReference type="PROSITE" id="PS50085">
    <property type="entry name" value="RAPGAP"/>
    <property type="match status" value="1"/>
</dbReference>
<keyword id="KW-0025">Alternative splicing</keyword>
<keyword id="KW-0343">GTPase activation</keyword>
<keyword id="KW-0597">Phosphoprotein</keyword>
<keyword id="KW-1267">Proteomics identification</keyword>
<keyword id="KW-1185">Reference proteome</keyword>
<reference key="1">
    <citation type="journal article" date="1999" name="DNA Res.">
        <title>Prediction of the coding sequences of unidentified human genes. XV. The complete sequences of 100 new cDNA clones from brain which code for large proteins in vitro.</title>
        <authorList>
            <person name="Nagase T."/>
            <person name="Ishikawa K."/>
            <person name="Kikuno R."/>
            <person name="Hirosawa M."/>
            <person name="Nomura N."/>
            <person name="Ohara O."/>
        </authorList>
    </citation>
    <scope>NUCLEOTIDE SEQUENCE [LARGE SCALE MRNA] (ISOFORM 3)</scope>
    <source>
        <tissue>Brain</tissue>
    </source>
</reference>
<reference key="2">
    <citation type="journal article" date="2002" name="DNA Res.">
        <title>Construction of expression-ready cDNA clones for KIAA genes: manual curation of 330 KIAA cDNA clones.</title>
        <authorList>
            <person name="Nakajima D."/>
            <person name="Okazaki N."/>
            <person name="Yamakawa H."/>
            <person name="Kikuno R."/>
            <person name="Ohara O."/>
            <person name="Nagase T."/>
        </authorList>
    </citation>
    <scope>SEQUENCE REVISION</scope>
</reference>
<reference key="3">
    <citation type="submission" date="2005-01" db="EMBL/GenBank/DDBJ databases">
        <authorList>
            <person name="Ohara O."/>
            <person name="Nagase T."/>
            <person name="Kikuno R."/>
        </authorList>
    </citation>
    <scope>SEQUENCE REVISION</scope>
</reference>
<reference key="4">
    <citation type="journal article" date="2007" name="BMC Genomics">
        <title>The full-ORF clone resource of the German cDNA consortium.</title>
        <authorList>
            <person name="Bechtel S."/>
            <person name="Rosenfelder H."/>
            <person name="Duda A."/>
            <person name="Schmidt C.P."/>
            <person name="Ernst U."/>
            <person name="Wellenreuther R."/>
            <person name="Mehrle A."/>
            <person name="Schuster C."/>
            <person name="Bahr A."/>
            <person name="Bloecker H."/>
            <person name="Heubner D."/>
            <person name="Hoerlein A."/>
            <person name="Michel G."/>
            <person name="Wedler H."/>
            <person name="Koehrer K."/>
            <person name="Ottenwaelder B."/>
            <person name="Poustka A."/>
            <person name="Wiemann S."/>
            <person name="Schupp I."/>
        </authorList>
    </citation>
    <scope>NUCLEOTIDE SEQUENCE [LARGE SCALE MRNA] (ISOFORM 2)</scope>
    <source>
        <tissue>Melanoma</tissue>
    </source>
</reference>
<reference key="5">
    <citation type="journal article" date="2001" name="Nature">
        <title>The DNA sequence and comparative analysis of human chromosome 20.</title>
        <authorList>
            <person name="Deloukas P."/>
            <person name="Matthews L.H."/>
            <person name="Ashurst J.L."/>
            <person name="Burton J."/>
            <person name="Gilbert J.G.R."/>
            <person name="Jones M."/>
            <person name="Stavrides G."/>
            <person name="Almeida J.P."/>
            <person name="Babbage A.K."/>
            <person name="Bagguley C.L."/>
            <person name="Bailey J."/>
            <person name="Barlow K.F."/>
            <person name="Bates K.N."/>
            <person name="Beard L.M."/>
            <person name="Beare D.M."/>
            <person name="Beasley O.P."/>
            <person name="Bird C.P."/>
            <person name="Blakey S.E."/>
            <person name="Bridgeman A.M."/>
            <person name="Brown A.J."/>
            <person name="Buck D."/>
            <person name="Burrill W.D."/>
            <person name="Butler A.P."/>
            <person name="Carder C."/>
            <person name="Carter N.P."/>
            <person name="Chapman J.C."/>
            <person name="Clamp M."/>
            <person name="Clark G."/>
            <person name="Clark L.N."/>
            <person name="Clark S.Y."/>
            <person name="Clee C.M."/>
            <person name="Clegg S."/>
            <person name="Cobley V.E."/>
            <person name="Collier R.E."/>
            <person name="Connor R.E."/>
            <person name="Corby N.R."/>
            <person name="Coulson A."/>
            <person name="Coville G.J."/>
            <person name="Deadman R."/>
            <person name="Dhami P.D."/>
            <person name="Dunn M."/>
            <person name="Ellington A.G."/>
            <person name="Frankland J.A."/>
            <person name="Fraser A."/>
            <person name="French L."/>
            <person name="Garner P."/>
            <person name="Grafham D.V."/>
            <person name="Griffiths C."/>
            <person name="Griffiths M.N.D."/>
            <person name="Gwilliam R."/>
            <person name="Hall R.E."/>
            <person name="Hammond S."/>
            <person name="Harley J.L."/>
            <person name="Heath P.D."/>
            <person name="Ho S."/>
            <person name="Holden J.L."/>
            <person name="Howden P.J."/>
            <person name="Huckle E."/>
            <person name="Hunt A.R."/>
            <person name="Hunt S.E."/>
            <person name="Jekosch K."/>
            <person name="Johnson C.M."/>
            <person name="Johnson D."/>
            <person name="Kay M.P."/>
            <person name="Kimberley A.M."/>
            <person name="King A."/>
            <person name="Knights A."/>
            <person name="Laird G.K."/>
            <person name="Lawlor S."/>
            <person name="Lehvaeslaiho M.H."/>
            <person name="Leversha M.A."/>
            <person name="Lloyd C."/>
            <person name="Lloyd D.M."/>
            <person name="Lovell J.D."/>
            <person name="Marsh V.L."/>
            <person name="Martin S.L."/>
            <person name="McConnachie L.J."/>
            <person name="McLay K."/>
            <person name="McMurray A.A."/>
            <person name="Milne S.A."/>
            <person name="Mistry D."/>
            <person name="Moore M.J.F."/>
            <person name="Mullikin J.C."/>
            <person name="Nickerson T."/>
            <person name="Oliver K."/>
            <person name="Parker A."/>
            <person name="Patel R."/>
            <person name="Pearce T.A.V."/>
            <person name="Peck A.I."/>
            <person name="Phillimore B.J.C.T."/>
            <person name="Prathalingam S.R."/>
            <person name="Plumb R.W."/>
            <person name="Ramsay H."/>
            <person name="Rice C.M."/>
            <person name="Ross M.T."/>
            <person name="Scott C.E."/>
            <person name="Sehra H.K."/>
            <person name="Shownkeen R."/>
            <person name="Sims S."/>
            <person name="Skuce C.D."/>
            <person name="Smith M.L."/>
            <person name="Soderlund C."/>
            <person name="Steward C.A."/>
            <person name="Sulston J.E."/>
            <person name="Swann R.M."/>
            <person name="Sycamore N."/>
            <person name="Taylor R."/>
            <person name="Tee L."/>
            <person name="Thomas D.W."/>
            <person name="Thorpe A."/>
            <person name="Tracey A."/>
            <person name="Tromans A.C."/>
            <person name="Vaudin M."/>
            <person name="Wall M."/>
            <person name="Wallis J.M."/>
            <person name="Whitehead S.L."/>
            <person name="Whittaker P."/>
            <person name="Willey D.L."/>
            <person name="Williams L."/>
            <person name="Williams S.A."/>
            <person name="Wilming L."/>
            <person name="Wray P.W."/>
            <person name="Hubbard T."/>
            <person name="Durbin R.M."/>
            <person name="Bentley D.R."/>
            <person name="Beck S."/>
            <person name="Rogers J."/>
        </authorList>
    </citation>
    <scope>NUCLEOTIDE SEQUENCE [LARGE SCALE GENOMIC DNA]</scope>
</reference>
<reference key="6">
    <citation type="journal article" date="2004" name="Genome Res.">
        <title>The status, quality, and expansion of the NIH full-length cDNA project: the Mammalian Gene Collection (MGC).</title>
        <authorList>
            <consortium name="The MGC Project Team"/>
        </authorList>
    </citation>
    <scope>NUCLEOTIDE SEQUENCE [LARGE SCALE MRNA] (ISOFORM 1)</scope>
    <source>
        <tissue>Brain</tissue>
        <tissue>Lung</tissue>
        <tissue>Testis</tissue>
    </source>
</reference>
<reference key="7">
    <citation type="journal article" date="2004" name="Nat. Genet.">
        <title>Complete sequencing and characterization of 21,243 full-length human cDNAs.</title>
        <authorList>
            <person name="Ota T."/>
            <person name="Suzuki Y."/>
            <person name="Nishikawa T."/>
            <person name="Otsuki T."/>
            <person name="Sugiyama T."/>
            <person name="Irie R."/>
            <person name="Wakamatsu A."/>
            <person name="Hayashi K."/>
            <person name="Sato H."/>
            <person name="Nagai K."/>
            <person name="Kimura K."/>
            <person name="Makita H."/>
            <person name="Sekine M."/>
            <person name="Obayashi M."/>
            <person name="Nishi T."/>
            <person name="Shibahara T."/>
            <person name="Tanaka T."/>
            <person name="Ishii S."/>
            <person name="Yamamoto J."/>
            <person name="Saito K."/>
            <person name="Kawai Y."/>
            <person name="Isono Y."/>
            <person name="Nakamura Y."/>
            <person name="Nagahari K."/>
            <person name="Murakami K."/>
            <person name="Yasuda T."/>
            <person name="Iwayanagi T."/>
            <person name="Wagatsuma M."/>
            <person name="Shiratori A."/>
            <person name="Sudo H."/>
            <person name="Hosoiri T."/>
            <person name="Kaku Y."/>
            <person name="Kodaira H."/>
            <person name="Kondo H."/>
            <person name="Sugawara M."/>
            <person name="Takahashi M."/>
            <person name="Kanda K."/>
            <person name="Yokoi T."/>
            <person name="Furuya T."/>
            <person name="Kikkawa E."/>
            <person name="Omura Y."/>
            <person name="Abe K."/>
            <person name="Kamihara K."/>
            <person name="Katsuta N."/>
            <person name="Sato K."/>
            <person name="Tanikawa M."/>
            <person name="Yamazaki M."/>
            <person name="Ninomiya K."/>
            <person name="Ishibashi T."/>
            <person name="Yamashita H."/>
            <person name="Murakawa K."/>
            <person name="Fujimori K."/>
            <person name="Tanai H."/>
            <person name="Kimata M."/>
            <person name="Watanabe M."/>
            <person name="Hiraoka S."/>
            <person name="Chiba Y."/>
            <person name="Ishida S."/>
            <person name="Ono Y."/>
            <person name="Takiguchi S."/>
            <person name="Watanabe S."/>
            <person name="Yosida M."/>
            <person name="Hotuta T."/>
            <person name="Kusano J."/>
            <person name="Kanehori K."/>
            <person name="Takahashi-Fujii A."/>
            <person name="Hara H."/>
            <person name="Tanase T.-O."/>
            <person name="Nomura Y."/>
            <person name="Togiya S."/>
            <person name="Komai F."/>
            <person name="Hara R."/>
            <person name="Takeuchi K."/>
            <person name="Arita M."/>
            <person name="Imose N."/>
            <person name="Musashino K."/>
            <person name="Yuuki H."/>
            <person name="Oshima A."/>
            <person name="Sasaki N."/>
            <person name="Aotsuka S."/>
            <person name="Yoshikawa Y."/>
            <person name="Matsunawa H."/>
            <person name="Ichihara T."/>
            <person name="Shiohata N."/>
            <person name="Sano S."/>
            <person name="Moriya S."/>
            <person name="Momiyama H."/>
            <person name="Satoh N."/>
            <person name="Takami S."/>
            <person name="Terashima Y."/>
            <person name="Suzuki O."/>
            <person name="Nakagawa S."/>
            <person name="Senoh A."/>
            <person name="Mizoguchi H."/>
            <person name="Goto Y."/>
            <person name="Shimizu F."/>
            <person name="Wakebe H."/>
            <person name="Hishigaki H."/>
            <person name="Watanabe T."/>
            <person name="Sugiyama A."/>
            <person name="Takemoto M."/>
            <person name="Kawakami B."/>
            <person name="Yamazaki M."/>
            <person name="Watanabe K."/>
            <person name="Kumagai A."/>
            <person name="Itakura S."/>
            <person name="Fukuzumi Y."/>
            <person name="Fujimori Y."/>
            <person name="Komiyama M."/>
            <person name="Tashiro H."/>
            <person name="Tanigami A."/>
            <person name="Fujiwara T."/>
            <person name="Ono T."/>
            <person name="Yamada K."/>
            <person name="Fujii Y."/>
            <person name="Ozaki K."/>
            <person name="Hirao M."/>
            <person name="Ohmori Y."/>
            <person name="Kawabata A."/>
            <person name="Hikiji T."/>
            <person name="Kobatake N."/>
            <person name="Inagaki H."/>
            <person name="Ikema Y."/>
            <person name="Okamoto S."/>
            <person name="Okitani R."/>
            <person name="Kawakami T."/>
            <person name="Noguchi S."/>
            <person name="Itoh T."/>
            <person name="Shigeta K."/>
            <person name="Senba T."/>
            <person name="Matsumura K."/>
            <person name="Nakajima Y."/>
            <person name="Mizuno T."/>
            <person name="Morinaga M."/>
            <person name="Sasaki M."/>
            <person name="Togashi T."/>
            <person name="Oyama M."/>
            <person name="Hata H."/>
            <person name="Watanabe M."/>
            <person name="Komatsu T."/>
            <person name="Mizushima-Sugano J."/>
            <person name="Satoh T."/>
            <person name="Shirai Y."/>
            <person name="Takahashi Y."/>
            <person name="Nakagawa K."/>
            <person name="Okumura K."/>
            <person name="Nagase T."/>
            <person name="Nomura N."/>
            <person name="Kikuchi H."/>
            <person name="Masuho Y."/>
            <person name="Yamashita R."/>
            <person name="Nakai K."/>
            <person name="Yada T."/>
            <person name="Nakamura Y."/>
            <person name="Ohara O."/>
            <person name="Isogai T."/>
            <person name="Sugano S."/>
        </authorList>
    </citation>
    <scope>NUCLEOTIDE SEQUENCE [LARGE SCALE MRNA] OF 17-1494 (ISOFORM 4)</scope>
    <source>
        <tissue>Tongue</tissue>
    </source>
</reference>
<reference key="8">
    <citation type="journal article" date="2006" name="Cell. Signal.">
        <title>Adipocytes contain a novel complex similar to the tuberous sclerosis complex.</title>
        <authorList>
            <person name="Gridley S."/>
            <person name="Chavez J.A."/>
            <person name="Lane W.S."/>
            <person name="Lienhard G.E."/>
        </authorList>
    </citation>
    <scope>INTERACTION WITH RALGAPA2</scope>
</reference>
<reference key="9">
    <citation type="journal article" date="2008" name="Proc. Natl. Acad. Sci. U.S.A.">
        <title>A quantitative atlas of mitotic phosphorylation.</title>
        <authorList>
            <person name="Dephoure N."/>
            <person name="Zhou C."/>
            <person name="Villen J."/>
            <person name="Beausoleil S.A."/>
            <person name="Bakalarski C.E."/>
            <person name="Elledge S.J."/>
            <person name="Gygi S.P."/>
        </authorList>
    </citation>
    <scope>IDENTIFICATION BY MASS SPECTROMETRY [LARGE SCALE ANALYSIS]</scope>
    <source>
        <tissue>Cervix carcinoma</tissue>
    </source>
</reference>
<reference key="10">
    <citation type="journal article" date="2009" name="Sci. Signal.">
        <title>Quantitative phosphoproteomic analysis of T cell receptor signaling reveals system-wide modulation of protein-protein interactions.</title>
        <authorList>
            <person name="Mayya V."/>
            <person name="Lundgren D.H."/>
            <person name="Hwang S.-I."/>
            <person name="Rezaul K."/>
            <person name="Wu L."/>
            <person name="Eng J.K."/>
            <person name="Rodionov V."/>
            <person name="Han D.K."/>
        </authorList>
    </citation>
    <scope>PHOSPHORYLATION [LARGE SCALE ANALYSIS] AT THR-734</scope>
    <scope>IDENTIFICATION BY MASS SPECTROMETRY [LARGE SCALE ANALYSIS]</scope>
    <source>
        <tissue>Leukemic T-cell</tissue>
    </source>
</reference>
<reference key="11">
    <citation type="journal article" date="2011" name="BMC Syst. Biol.">
        <title>Initial characterization of the human central proteome.</title>
        <authorList>
            <person name="Burkard T.R."/>
            <person name="Planyavsky M."/>
            <person name="Kaupe I."/>
            <person name="Breitwieser F.P."/>
            <person name="Buerckstuemmer T."/>
            <person name="Bennett K.L."/>
            <person name="Superti-Furga G."/>
            <person name="Colinge J."/>
        </authorList>
    </citation>
    <scope>IDENTIFICATION BY MASS SPECTROMETRY [LARGE SCALE ANALYSIS]</scope>
</reference>
<reference key="12">
    <citation type="journal article" date="2013" name="J. Proteome Res.">
        <title>Toward a comprehensive characterization of a human cancer cell phosphoproteome.</title>
        <authorList>
            <person name="Zhou H."/>
            <person name="Di Palma S."/>
            <person name="Preisinger C."/>
            <person name="Peng M."/>
            <person name="Polat A.N."/>
            <person name="Heck A.J."/>
            <person name="Mohammed S."/>
        </authorList>
    </citation>
    <scope>PHOSPHORYLATION [LARGE SCALE ANALYSIS] AT SER-359; THR-379 AND SER-720</scope>
    <scope>IDENTIFICATION BY MASS SPECTROMETRY [LARGE SCALE ANALYSIS]</scope>
    <source>
        <tissue>Cervix carcinoma</tissue>
        <tissue>Erythroleukemia</tissue>
    </source>
</reference>
<reference key="13">
    <citation type="journal article" date="2014" name="J. Proteomics">
        <title>An enzyme assisted RP-RPLC approach for in-depth analysis of human liver phosphoproteome.</title>
        <authorList>
            <person name="Bian Y."/>
            <person name="Song C."/>
            <person name="Cheng K."/>
            <person name="Dong M."/>
            <person name="Wang F."/>
            <person name="Huang J."/>
            <person name="Sun D."/>
            <person name="Wang L."/>
            <person name="Ye M."/>
            <person name="Zou H."/>
        </authorList>
    </citation>
    <scope>PHOSPHORYLATION [LARGE SCALE ANALYSIS] AT SER-1285</scope>
    <scope>IDENTIFICATION BY MASS SPECTROMETRY [LARGE SCALE ANALYSIS]</scope>
    <source>
        <tissue>Liver</tissue>
    </source>
</reference>
<feature type="chain" id="PRO_0000056756" description="Ral GTPase-activating protein subunit beta">
    <location>
        <begin position="1"/>
        <end position="1494"/>
    </location>
</feature>
<feature type="domain" description="Rap-GAP" evidence="4">
    <location>
        <begin position="1149"/>
        <end position="1392"/>
    </location>
</feature>
<feature type="region of interest" description="Disordered" evidence="5">
    <location>
        <begin position="355"/>
        <end position="437"/>
    </location>
</feature>
<feature type="region of interest" description="Disordered" evidence="5">
    <location>
        <begin position="709"/>
        <end position="738"/>
    </location>
</feature>
<feature type="region of interest" description="Disordered" evidence="5">
    <location>
        <begin position="1312"/>
        <end position="1335"/>
    </location>
</feature>
<feature type="compositionally biased region" description="Polar residues" evidence="5">
    <location>
        <begin position="369"/>
        <end position="381"/>
    </location>
</feature>
<feature type="compositionally biased region" description="Polar residues" evidence="5">
    <location>
        <begin position="392"/>
        <end position="428"/>
    </location>
</feature>
<feature type="compositionally biased region" description="Polar residues" evidence="5">
    <location>
        <begin position="711"/>
        <end position="735"/>
    </location>
</feature>
<feature type="compositionally biased region" description="Polar residues" evidence="5">
    <location>
        <begin position="1312"/>
        <end position="1323"/>
    </location>
</feature>
<feature type="modified residue" description="Phosphoserine" evidence="11">
    <location>
        <position position="359"/>
    </location>
</feature>
<feature type="modified residue" description="Phosphothreonine" evidence="2">
    <location>
        <position position="363"/>
    </location>
</feature>
<feature type="modified residue" description="Phosphothreonine" evidence="11">
    <location>
        <position position="379"/>
    </location>
</feature>
<feature type="modified residue" description="Phosphoserine" evidence="3">
    <location>
        <position position="421"/>
    </location>
</feature>
<feature type="modified residue" description="Phosphoserine" evidence="11">
    <location>
        <position position="720"/>
    </location>
</feature>
<feature type="modified residue" description="Phosphothreonine" evidence="10">
    <location>
        <position position="734"/>
    </location>
</feature>
<feature type="modified residue" description="Phosphoserine" evidence="12">
    <location>
        <position position="1285"/>
    </location>
</feature>
<feature type="splice variant" id="VSP_009693" description="In isoform 2." evidence="8">
    <location>
        <begin position="1"/>
        <end position="222"/>
    </location>
</feature>
<feature type="splice variant" id="VSP_009694" description="In isoform 3." evidence="6">
    <location>
        <begin position="749"/>
        <end position="752"/>
    </location>
</feature>
<feature type="splice variant" id="VSP_009695" description="In isoform 4." evidence="7">
    <location>
        <begin position="943"/>
        <end position="1473"/>
    </location>
</feature>
<feature type="splice variant" id="VSP_009696" description="In isoform 2 and isoform 3." evidence="6 8">
    <original>E</original>
    <variation>EE</variation>
    <location>
        <position position="1233"/>
    </location>
</feature>
<feature type="sequence conflict" description="In Ref. 1; CAD39096." evidence="9" ref="1">
    <original>P</original>
    <variation>S</variation>
    <location>
        <position position="326"/>
    </location>
</feature>
<feature type="sequence conflict" description="In Ref. 6; AAH18668." evidence="9" ref="6">
    <original>Y</original>
    <variation>G</variation>
    <location>
        <position position="1072"/>
    </location>
</feature>
<sequence>MYSEWRSLHLVIQNDQGHTSVLHSYPESVGREVANAVVRPLGQVLGTPSVAGSENLLKTDKEVKWTMEVICYGLTLPLDGETVKYCVDVYTDWIMALVLPKDSIPLPVIKEPNQYVQTILKHLQNLFVPRQEQGSSQIRLCLQVLRAIQKLARESSLMARETWEVLLLFLLQINDILLAPPTVQGGIAENLAEKLIGVLFEVWLLACTRCFPTPPYWKTAKEMVANWRHHPAVVEQWSKVICALTSRLLRFTYGPSFPAFKVPDEDASLIPPEMDNECVAQTWFRFLHMLSNPVDLSNPAIISSTPKFQEQFLNVSGMPQELNQYPCLKHLPQIFFRAMRGISCLVDAFLGISRPRSDSAPPTPVNRLSMPQSAAVSTTPPHNRRHRAVTVNKATMKTSTVSTAHASKVQHQTSSTSPLSSPNQTSSEPRPLPAPRRPKVNSILNLFGSWLFDAAFVHCKLHNGINRDSSMTAITTQASMEFRRKGSQMSTDTMVSNPMFDASEFPDNYEAGRAEACGTLCRIFCSKKTGEEILPAYLSRFYMLLIQGLQINDYVCHPVLASVILNSPPLFCCDLKGIDVVVPYFISALETILPDRELSKFKSYVNPTELRRSSINILLSLLPLPHHFGTVKSEVVLEGKFSNDDSSSYDKPITFLSLKLRLVNILIGALQTETDPNNTQMILGAMLNIVQDSALLEAIGCQMEMGGGENNLKSHSRTNSGISSASGGSTEPTTPDSERPAQALLRDYALNTDSAAGLLIRSIHLVTQRLNSQWRQDMSISLAALELLSGLAKVKVMVDSGDRKRAISSVCTYIVYQCSRPAPLHSRDLHSMIVAAFQCLCVWLTEHPDMLDEKDCLKEVLEIVELGISGSKSKNNEQEVKYKGDKEPNPASMRVKDAAEATLTCIMQLLGAFPSPSGPASPCSLVNETTLIKYSRLPTINKHSFRYFVLDNSVILAMLEQPLGNEQNDFFPSVTVLVRGMSGRLAWAQQLCLLPRGAKANQKLFVPEPRPVPKNDVGFKYSVKHRPFPEEVDKIPFVKADLSIPDLHEIVTEELEERHEKLRSGMAQQIAYEIHLEQQSEEELQKRSFPDPVTDCKPPPPAQEFQTARLFLSHFGFLSLEALKEPANSRLPPHLIALDSTIPGFFDDIGYLDLLPCRPFDTVFIFYMKPGQKTNQEILKNVESSRTVQPHFLEFLLSLGWSVDVGRHPGWTGHVSTSWSINCCDDGEGSQQEVISSEDIGASIFNGQKKVLYYADALTEIAFVVPSPVESLTDSLESNISDQDSDSNMDLMPGILKQPSLTLELFPNHTDNLNSSQRLSPSSRMRKLPQGRPVPPLGPETRVSVVWVERYDDIENFPLSELMTEISTGVETTANSSTSLRSTTLEKEVPVIFIHPLNTGLFRIKIQGATGKFNMVIPLVDGMIVSRRALGFLVRQTVINICRRKRLESDSYSPPHVRRKQKITDIVNKYRNKQLEPEFYTSLFQEVGLKNCSS</sequence>
<organism>
    <name type="scientific">Homo sapiens</name>
    <name type="common">Human</name>
    <dbReference type="NCBI Taxonomy" id="9606"/>
    <lineage>
        <taxon>Eukaryota</taxon>
        <taxon>Metazoa</taxon>
        <taxon>Chordata</taxon>
        <taxon>Craniata</taxon>
        <taxon>Vertebrata</taxon>
        <taxon>Euteleostomi</taxon>
        <taxon>Mammalia</taxon>
        <taxon>Eutheria</taxon>
        <taxon>Euarchontoglires</taxon>
        <taxon>Primates</taxon>
        <taxon>Haplorrhini</taxon>
        <taxon>Catarrhini</taxon>
        <taxon>Hominidae</taxon>
        <taxon>Homo</taxon>
    </lineage>
</organism>
<evidence type="ECO:0000250" key="1"/>
<evidence type="ECO:0000250" key="2">
    <source>
        <dbReference type="UniProtKB" id="P86410"/>
    </source>
</evidence>
<evidence type="ECO:0000250" key="3">
    <source>
        <dbReference type="UniProtKB" id="Q8BQZ4"/>
    </source>
</evidence>
<evidence type="ECO:0000255" key="4">
    <source>
        <dbReference type="PROSITE-ProRule" id="PRU00165"/>
    </source>
</evidence>
<evidence type="ECO:0000256" key="5">
    <source>
        <dbReference type="SAM" id="MobiDB-lite"/>
    </source>
</evidence>
<evidence type="ECO:0000303" key="6">
    <source>
    </source>
</evidence>
<evidence type="ECO:0000303" key="7">
    <source>
    </source>
</evidence>
<evidence type="ECO:0000303" key="8">
    <source>
    </source>
</evidence>
<evidence type="ECO:0000305" key="9"/>
<evidence type="ECO:0007744" key="10">
    <source>
    </source>
</evidence>
<evidence type="ECO:0007744" key="11">
    <source>
    </source>
</evidence>
<evidence type="ECO:0007744" key="12">
    <source>
    </source>
</evidence>
<name>RLGPB_HUMAN</name>
<proteinExistence type="evidence at protein level"/>
<comment type="function">
    <text evidence="1">Non-catalytic subunit of the heterodimeric RalGAP1 and RalGAP2 complexes which act as GTPase activators for the Ras-like small GTPases RALA and RALB.</text>
</comment>
<comment type="subunit">
    <text evidence="1">Component of the heterodimeric RalGAP1 complex with RALGAPA1 and of the heterodimeric RalGAP2 complex with RALGAPA2. Heterodimerization is required for activity (By similarity).</text>
</comment>
<comment type="interaction">
    <interactant intactId="EBI-1755842">
        <id>Q86X10</id>
    </interactant>
    <interactant intactId="EBI-11102276">
        <id>Q9HD26-2</id>
        <label>GOPC</label>
    </interactant>
    <organismsDiffer>false</organismsDiffer>
    <experiments>3</experiments>
</comment>
<comment type="alternative products">
    <event type="alternative splicing"/>
    <isoform>
        <id>Q86X10-1</id>
        <name>1</name>
        <sequence type="displayed"/>
    </isoform>
    <isoform>
        <id>Q86X10-2</id>
        <name>2</name>
        <sequence type="described" ref="VSP_009693 VSP_009696"/>
    </isoform>
    <isoform>
        <id>Q86X10-3</id>
        <name>3</name>
        <sequence type="described" ref="VSP_009694 VSP_009696"/>
    </isoform>
    <isoform>
        <id>Q86X10-4</id>
        <name>4</name>
        <sequence type="described" ref="VSP_009695"/>
    </isoform>
</comment>
<comment type="tissue specificity">
    <text>Highly expressed in brain, mostly in amygdala.</text>
</comment>
<comment type="miscellaneous">
    <molecule>Isoform 2</molecule>
    <text evidence="9">May be due to a competing acceptor splice site.</text>
</comment>
<comment type="miscellaneous">
    <molecule>Isoform 3</molecule>
    <text evidence="9">May be due to a competing acceptor splice site.</text>
</comment>
<comment type="miscellaneous">
    <molecule>Isoform 4</molecule>
    <text evidence="9">Splicing acceptor site is not canonical.</text>
</comment>
<comment type="sequence caution" evidence="9">
    <conflict type="erroneous initiation">
        <sequence resource="EMBL-CDS" id="BAA86533"/>
    </conflict>
    <text>Extended N-terminus.</text>
</comment>
<comment type="sequence caution" evidence="9">
    <conflict type="erroneous initiation">
        <sequence resource="EMBL-CDS" id="BAC85649"/>
    </conflict>
    <text>Truncated N-terminus.</text>
</comment>
<comment type="sequence caution" evidence="9">
    <conflict type="erroneous initiation">
        <sequence resource="EMBL-CDS" id="CAB61346"/>
    </conflict>
    <text>Truncated N-terminus.</text>
</comment>
<comment type="sequence caution" evidence="9">
    <conflict type="erroneous initiation">
        <sequence resource="EMBL-CDS" id="CAD39096"/>
    </conflict>
    <text>Extended N-terminus.</text>
</comment>